<feature type="chain" id="PRO_0000231854" description="Pyridoxine 5'-phosphate synthase">
    <location>
        <begin position="1"/>
        <end position="243"/>
    </location>
</feature>
<feature type="active site" description="Proton acceptor" evidence="1">
    <location>
        <position position="45"/>
    </location>
</feature>
<feature type="active site" description="Proton acceptor" evidence="1">
    <location>
        <position position="72"/>
    </location>
</feature>
<feature type="active site" description="Proton donor" evidence="1">
    <location>
        <position position="193"/>
    </location>
</feature>
<feature type="binding site" evidence="1">
    <location>
        <position position="9"/>
    </location>
    <ligand>
        <name>3-amino-2-oxopropyl phosphate</name>
        <dbReference type="ChEBI" id="CHEBI:57279"/>
    </ligand>
</feature>
<feature type="binding site" evidence="1">
    <location>
        <begin position="11"/>
        <end position="12"/>
    </location>
    <ligand>
        <name>1-deoxy-D-xylulose 5-phosphate</name>
        <dbReference type="ChEBI" id="CHEBI:57792"/>
    </ligand>
</feature>
<feature type="binding site" evidence="1">
    <location>
        <position position="20"/>
    </location>
    <ligand>
        <name>3-amino-2-oxopropyl phosphate</name>
        <dbReference type="ChEBI" id="CHEBI:57279"/>
    </ligand>
</feature>
<feature type="binding site" evidence="1">
    <location>
        <position position="47"/>
    </location>
    <ligand>
        <name>1-deoxy-D-xylulose 5-phosphate</name>
        <dbReference type="ChEBI" id="CHEBI:57792"/>
    </ligand>
</feature>
<feature type="binding site" evidence="1">
    <location>
        <position position="52"/>
    </location>
    <ligand>
        <name>1-deoxy-D-xylulose 5-phosphate</name>
        <dbReference type="ChEBI" id="CHEBI:57792"/>
    </ligand>
</feature>
<feature type="binding site" evidence="1">
    <location>
        <position position="102"/>
    </location>
    <ligand>
        <name>1-deoxy-D-xylulose 5-phosphate</name>
        <dbReference type="ChEBI" id="CHEBI:57792"/>
    </ligand>
</feature>
<feature type="binding site" evidence="1">
    <location>
        <position position="194"/>
    </location>
    <ligand>
        <name>3-amino-2-oxopropyl phosphate</name>
        <dbReference type="ChEBI" id="CHEBI:57279"/>
    </ligand>
</feature>
<feature type="binding site" evidence="1">
    <location>
        <begin position="215"/>
        <end position="216"/>
    </location>
    <ligand>
        <name>3-amino-2-oxopropyl phosphate</name>
        <dbReference type="ChEBI" id="CHEBI:57279"/>
    </ligand>
</feature>
<feature type="site" description="Transition state stabilizer" evidence="1">
    <location>
        <position position="153"/>
    </location>
</feature>
<evidence type="ECO:0000255" key="1">
    <source>
        <dbReference type="HAMAP-Rule" id="MF_00279"/>
    </source>
</evidence>
<name>PDXJ_ALIF1</name>
<sequence>MSSILLGVNIDHVATLRNARGTKYPDPVHAAEIAERAGAAGITIHLREDRRHIKDRDVRILRETLQTRMNLEMAVTDEMVGIALETKPEFVCLVPEKREELTTEGGLNVSGQLEKVKAATQKLTEAGIKVSLFIDADKEQIDAAVECGAPFIELHTGAYADAETEEAQQDELKKIAAGASYAASKGLIVNAGHGLTYHNVEAIAALPEIYELNIGHSIMGRAMFDGLEKAVADMHRIMLGARK</sequence>
<reference key="1">
    <citation type="journal article" date="2005" name="Proc. Natl. Acad. Sci. U.S.A.">
        <title>Complete genome sequence of Vibrio fischeri: a symbiotic bacterium with pathogenic congeners.</title>
        <authorList>
            <person name="Ruby E.G."/>
            <person name="Urbanowski M."/>
            <person name="Campbell J."/>
            <person name="Dunn A."/>
            <person name="Faini M."/>
            <person name="Gunsalus R."/>
            <person name="Lostroh P."/>
            <person name="Lupp C."/>
            <person name="McCann J."/>
            <person name="Millikan D."/>
            <person name="Schaefer A."/>
            <person name="Stabb E."/>
            <person name="Stevens A."/>
            <person name="Visick K."/>
            <person name="Whistler C."/>
            <person name="Greenberg E.P."/>
        </authorList>
    </citation>
    <scope>NUCLEOTIDE SEQUENCE [LARGE SCALE GENOMIC DNA]</scope>
    <source>
        <strain>ATCC 700601 / ES114</strain>
    </source>
</reference>
<accession>Q5E317</accession>
<proteinExistence type="inferred from homology"/>
<comment type="function">
    <text evidence="1">Catalyzes the complicated ring closure reaction between the two acyclic compounds 1-deoxy-D-xylulose-5-phosphate (DXP) and 3-amino-2-oxopropyl phosphate (1-amino-acetone-3-phosphate or AAP) to form pyridoxine 5'-phosphate (PNP) and inorganic phosphate.</text>
</comment>
<comment type="catalytic activity">
    <reaction evidence="1">
        <text>3-amino-2-oxopropyl phosphate + 1-deoxy-D-xylulose 5-phosphate = pyridoxine 5'-phosphate + phosphate + 2 H2O + H(+)</text>
        <dbReference type="Rhea" id="RHEA:15265"/>
        <dbReference type="ChEBI" id="CHEBI:15377"/>
        <dbReference type="ChEBI" id="CHEBI:15378"/>
        <dbReference type="ChEBI" id="CHEBI:43474"/>
        <dbReference type="ChEBI" id="CHEBI:57279"/>
        <dbReference type="ChEBI" id="CHEBI:57792"/>
        <dbReference type="ChEBI" id="CHEBI:58589"/>
        <dbReference type="EC" id="2.6.99.2"/>
    </reaction>
</comment>
<comment type="pathway">
    <text evidence="1">Cofactor biosynthesis; pyridoxine 5'-phosphate biosynthesis; pyridoxine 5'-phosphate from D-erythrose 4-phosphate: step 5/5.</text>
</comment>
<comment type="subunit">
    <text evidence="1">Homooctamer; tetramer of dimers.</text>
</comment>
<comment type="subcellular location">
    <subcellularLocation>
        <location evidence="1">Cytoplasm</location>
    </subcellularLocation>
</comment>
<comment type="similarity">
    <text evidence="1">Belongs to the PNP synthase family.</text>
</comment>
<organism>
    <name type="scientific">Aliivibrio fischeri (strain ATCC 700601 / ES114)</name>
    <name type="common">Vibrio fischeri</name>
    <dbReference type="NCBI Taxonomy" id="312309"/>
    <lineage>
        <taxon>Bacteria</taxon>
        <taxon>Pseudomonadati</taxon>
        <taxon>Pseudomonadota</taxon>
        <taxon>Gammaproteobacteria</taxon>
        <taxon>Vibrionales</taxon>
        <taxon>Vibrionaceae</taxon>
        <taxon>Aliivibrio</taxon>
    </lineage>
</organism>
<keyword id="KW-0963">Cytoplasm</keyword>
<keyword id="KW-0664">Pyridoxine biosynthesis</keyword>
<keyword id="KW-1185">Reference proteome</keyword>
<keyword id="KW-0808">Transferase</keyword>
<protein>
    <recommendedName>
        <fullName evidence="1">Pyridoxine 5'-phosphate synthase</fullName>
        <shortName evidence="1">PNP synthase</shortName>
        <ecNumber evidence="1">2.6.99.2</ecNumber>
    </recommendedName>
</protein>
<gene>
    <name evidence="1" type="primary">pdxJ</name>
    <name type="ordered locus">VF_2084</name>
</gene>
<dbReference type="EC" id="2.6.99.2" evidence="1"/>
<dbReference type="EMBL" id="CP000020">
    <property type="protein sequence ID" value="AAW86579.1"/>
    <property type="molecule type" value="Genomic_DNA"/>
</dbReference>
<dbReference type="RefSeq" id="WP_005420709.1">
    <property type="nucleotide sequence ID" value="NC_006840.2"/>
</dbReference>
<dbReference type="RefSeq" id="YP_205467.1">
    <property type="nucleotide sequence ID" value="NC_006840.2"/>
</dbReference>
<dbReference type="SMR" id="Q5E317"/>
<dbReference type="STRING" id="312309.VF_2084"/>
<dbReference type="EnsemblBacteria" id="AAW86579">
    <property type="protein sequence ID" value="AAW86579"/>
    <property type="gene ID" value="VF_2084"/>
</dbReference>
<dbReference type="GeneID" id="54164789"/>
<dbReference type="KEGG" id="vfi:VF_2084"/>
<dbReference type="PATRIC" id="fig|312309.11.peg.2126"/>
<dbReference type="eggNOG" id="COG0854">
    <property type="taxonomic scope" value="Bacteria"/>
</dbReference>
<dbReference type="HOGENOM" id="CLU_074563_0_0_6"/>
<dbReference type="OrthoDB" id="9806590at2"/>
<dbReference type="UniPathway" id="UPA00244">
    <property type="reaction ID" value="UER00313"/>
</dbReference>
<dbReference type="Proteomes" id="UP000000537">
    <property type="component" value="Chromosome I"/>
</dbReference>
<dbReference type="GO" id="GO:0005829">
    <property type="term" value="C:cytosol"/>
    <property type="evidence" value="ECO:0007669"/>
    <property type="project" value="TreeGrafter"/>
</dbReference>
<dbReference type="GO" id="GO:0033856">
    <property type="term" value="F:pyridoxine 5'-phosphate synthase activity"/>
    <property type="evidence" value="ECO:0007669"/>
    <property type="project" value="UniProtKB-EC"/>
</dbReference>
<dbReference type="GO" id="GO:0008615">
    <property type="term" value="P:pyridoxine biosynthetic process"/>
    <property type="evidence" value="ECO:0007669"/>
    <property type="project" value="UniProtKB-UniRule"/>
</dbReference>
<dbReference type="CDD" id="cd00003">
    <property type="entry name" value="PNPsynthase"/>
    <property type="match status" value="1"/>
</dbReference>
<dbReference type="FunFam" id="3.20.20.70:FF:000042">
    <property type="entry name" value="Pyridoxine 5'-phosphate synthase"/>
    <property type="match status" value="1"/>
</dbReference>
<dbReference type="Gene3D" id="3.20.20.70">
    <property type="entry name" value="Aldolase class I"/>
    <property type="match status" value="1"/>
</dbReference>
<dbReference type="HAMAP" id="MF_00279">
    <property type="entry name" value="PdxJ"/>
    <property type="match status" value="1"/>
</dbReference>
<dbReference type="InterPro" id="IPR013785">
    <property type="entry name" value="Aldolase_TIM"/>
</dbReference>
<dbReference type="InterPro" id="IPR004569">
    <property type="entry name" value="PyrdxlP_synth_PdxJ"/>
</dbReference>
<dbReference type="InterPro" id="IPR036130">
    <property type="entry name" value="Pyridoxine-5'_phos_synth"/>
</dbReference>
<dbReference type="NCBIfam" id="TIGR00559">
    <property type="entry name" value="pdxJ"/>
    <property type="match status" value="1"/>
</dbReference>
<dbReference type="NCBIfam" id="NF003623">
    <property type="entry name" value="PRK05265.1-1"/>
    <property type="match status" value="1"/>
</dbReference>
<dbReference type="NCBIfam" id="NF003624">
    <property type="entry name" value="PRK05265.1-2"/>
    <property type="match status" value="1"/>
</dbReference>
<dbReference type="NCBIfam" id="NF003625">
    <property type="entry name" value="PRK05265.1-3"/>
    <property type="match status" value="1"/>
</dbReference>
<dbReference type="NCBIfam" id="NF003627">
    <property type="entry name" value="PRK05265.1-5"/>
    <property type="match status" value="1"/>
</dbReference>
<dbReference type="PANTHER" id="PTHR30456">
    <property type="entry name" value="PYRIDOXINE 5'-PHOSPHATE SYNTHASE"/>
    <property type="match status" value="1"/>
</dbReference>
<dbReference type="PANTHER" id="PTHR30456:SF0">
    <property type="entry name" value="PYRIDOXINE 5'-PHOSPHATE SYNTHASE"/>
    <property type="match status" value="1"/>
</dbReference>
<dbReference type="Pfam" id="PF03740">
    <property type="entry name" value="PdxJ"/>
    <property type="match status" value="1"/>
</dbReference>
<dbReference type="SUPFAM" id="SSF63892">
    <property type="entry name" value="Pyridoxine 5'-phosphate synthase"/>
    <property type="match status" value="1"/>
</dbReference>